<feature type="chain" id="PRO_0000357419" description="Enolase-phosphatase E1">
    <location>
        <begin position="1"/>
        <end position="238"/>
    </location>
</feature>
<comment type="function">
    <text evidence="1">Bifunctional enzyme that catalyzes the enolization of 2,3-diketo-5-methylthiopentyl-1-phosphate (DK-MTP-1-P) into the intermediate 2-hydroxy-3-keto-5-methylthiopentenyl-1-phosphate (HK-MTPenyl-1-P), which is then dephosphorylated to form the acireductone 1,2-dihydroxy-3-keto-5-methylthiopentene (DHK-MTPene).</text>
</comment>
<comment type="catalytic activity">
    <reaction evidence="1">
        <text>5-methylsulfanyl-2,3-dioxopentyl phosphate + H2O = 1,2-dihydroxy-5-(methylsulfanyl)pent-1-en-3-one + phosphate</text>
        <dbReference type="Rhea" id="RHEA:21700"/>
        <dbReference type="ChEBI" id="CHEBI:15377"/>
        <dbReference type="ChEBI" id="CHEBI:43474"/>
        <dbReference type="ChEBI" id="CHEBI:49252"/>
        <dbReference type="ChEBI" id="CHEBI:58828"/>
        <dbReference type="EC" id="3.1.3.77"/>
    </reaction>
</comment>
<comment type="cofactor">
    <cofactor evidence="1">
        <name>Mg(2+)</name>
        <dbReference type="ChEBI" id="CHEBI:18420"/>
    </cofactor>
    <text evidence="1">Binds 1 Mg(2+) ion per subunit.</text>
</comment>
<comment type="pathway">
    <text evidence="1">Amino-acid biosynthesis; L-methionine biosynthesis via salvage pathway; L-methionine from S-methyl-5-thio-alpha-D-ribose 1-phosphate: step 3/6.</text>
</comment>
<comment type="pathway">
    <text evidence="1">Amino-acid biosynthesis; L-methionine biosynthesis via salvage pathway; L-methionine from S-methyl-5-thio-alpha-D-ribose 1-phosphate: step 4/6.</text>
</comment>
<comment type="subunit">
    <text evidence="1">Monomer.</text>
</comment>
<comment type="similarity">
    <text evidence="1">Belongs to the HAD-like hydrolase superfamily. MasA/MtnC family.</text>
</comment>
<accession>Q5N078</accession>
<protein>
    <recommendedName>
        <fullName evidence="1">Enolase-phosphatase E1</fullName>
        <ecNumber evidence="1">3.1.3.77</ecNumber>
    </recommendedName>
    <alternativeName>
        <fullName evidence="1">2,3-diketo-5-methylthio-1-phosphopentane phosphatase</fullName>
    </alternativeName>
</protein>
<name>MTNC_SYNP6</name>
<gene>
    <name evidence="1" type="primary">mtnC</name>
    <name type="ordered locus">syc2102_c</name>
</gene>
<sequence length="238" mass="25681">MPLPVSITTLLLDIEGTTTPVDFVFKVLFPYARDRVADFLATQGADPEVQADLDLLRQEYAQEAAAELPDWAGEDAIAAVPYIQWLIDSDRKSTGLKSLQGKIWEQGYVSGEIKGQLFADVLPAFQRWQAAGLAIAIFSSGSVQAQQLLFGYSEAGDLSPHLSGYFDTRTGPKREAASYGAIAAQLGKAPAQVLFVSDIPAELEAAATAGFQTRLSLRPGNATVEIGDWTTIHSFDEL</sequence>
<dbReference type="EC" id="3.1.3.77" evidence="1"/>
<dbReference type="EMBL" id="AP008231">
    <property type="protein sequence ID" value="BAD80292.1"/>
    <property type="molecule type" value="Genomic_DNA"/>
</dbReference>
<dbReference type="RefSeq" id="WP_011244412.1">
    <property type="nucleotide sequence ID" value="NZ_CP085785.1"/>
</dbReference>
<dbReference type="SMR" id="Q5N078"/>
<dbReference type="GeneID" id="72430867"/>
<dbReference type="KEGG" id="syc:syc2102_c"/>
<dbReference type="eggNOG" id="COG4229">
    <property type="taxonomic scope" value="Bacteria"/>
</dbReference>
<dbReference type="UniPathway" id="UPA00904">
    <property type="reaction ID" value="UER00876"/>
</dbReference>
<dbReference type="UniPathway" id="UPA00904">
    <property type="reaction ID" value="UER00877"/>
</dbReference>
<dbReference type="Proteomes" id="UP000001175">
    <property type="component" value="Chromosome"/>
</dbReference>
<dbReference type="GO" id="GO:0043715">
    <property type="term" value="F:2,3-diketo-5-methylthiopentyl-1-phosphate enolase activity"/>
    <property type="evidence" value="ECO:0007669"/>
    <property type="project" value="UniProtKB-UniRule"/>
</dbReference>
<dbReference type="GO" id="GO:0043716">
    <property type="term" value="F:2-hydroxy-3-keto-5-methylthiopentenyl-1-phosphate phosphatase activity"/>
    <property type="evidence" value="ECO:0007669"/>
    <property type="project" value="UniProtKB-UniRule"/>
</dbReference>
<dbReference type="GO" id="GO:0043874">
    <property type="term" value="F:acireductone synthase activity"/>
    <property type="evidence" value="ECO:0007669"/>
    <property type="project" value="UniProtKB-EC"/>
</dbReference>
<dbReference type="GO" id="GO:0000287">
    <property type="term" value="F:magnesium ion binding"/>
    <property type="evidence" value="ECO:0007669"/>
    <property type="project" value="UniProtKB-UniRule"/>
</dbReference>
<dbReference type="GO" id="GO:0019509">
    <property type="term" value="P:L-methionine salvage from methylthioadenosine"/>
    <property type="evidence" value="ECO:0007669"/>
    <property type="project" value="UniProtKB-UniRule"/>
</dbReference>
<dbReference type="CDD" id="cd01629">
    <property type="entry name" value="HAD_EP"/>
    <property type="match status" value="1"/>
</dbReference>
<dbReference type="Gene3D" id="1.10.720.60">
    <property type="match status" value="1"/>
</dbReference>
<dbReference type="Gene3D" id="3.40.50.1000">
    <property type="entry name" value="HAD superfamily/HAD-like"/>
    <property type="match status" value="1"/>
</dbReference>
<dbReference type="HAMAP" id="MF_01681">
    <property type="entry name" value="Salvage_MtnC"/>
    <property type="match status" value="1"/>
</dbReference>
<dbReference type="InterPro" id="IPR023943">
    <property type="entry name" value="Enolase-ppase_E1"/>
</dbReference>
<dbReference type="InterPro" id="IPR036412">
    <property type="entry name" value="HAD-like_sf"/>
</dbReference>
<dbReference type="InterPro" id="IPR006439">
    <property type="entry name" value="HAD-SF_hydro_IA"/>
</dbReference>
<dbReference type="InterPro" id="IPR023214">
    <property type="entry name" value="HAD_sf"/>
</dbReference>
<dbReference type="NCBIfam" id="TIGR01691">
    <property type="entry name" value="enolase-ppase"/>
    <property type="match status" value="1"/>
</dbReference>
<dbReference type="NCBIfam" id="TIGR01549">
    <property type="entry name" value="HAD-SF-IA-v1"/>
    <property type="match status" value="1"/>
</dbReference>
<dbReference type="PANTHER" id="PTHR20371">
    <property type="entry name" value="ENOLASE-PHOSPHATASE E1"/>
    <property type="match status" value="1"/>
</dbReference>
<dbReference type="PANTHER" id="PTHR20371:SF1">
    <property type="entry name" value="ENOLASE-PHOSPHATASE E1"/>
    <property type="match status" value="1"/>
</dbReference>
<dbReference type="Pfam" id="PF00702">
    <property type="entry name" value="Hydrolase"/>
    <property type="match status" value="1"/>
</dbReference>
<dbReference type="SFLD" id="SFLDG01133">
    <property type="entry name" value="C1.5.4:_Enolase-phosphatase_Li"/>
    <property type="match status" value="1"/>
</dbReference>
<dbReference type="SFLD" id="SFLDF00044">
    <property type="entry name" value="enolase-phosphatase"/>
    <property type="match status" value="1"/>
</dbReference>
<dbReference type="SUPFAM" id="SSF56784">
    <property type="entry name" value="HAD-like"/>
    <property type="match status" value="1"/>
</dbReference>
<keyword id="KW-0028">Amino-acid biosynthesis</keyword>
<keyword id="KW-0378">Hydrolase</keyword>
<keyword id="KW-0460">Magnesium</keyword>
<keyword id="KW-0479">Metal-binding</keyword>
<keyword id="KW-0486">Methionine biosynthesis</keyword>
<proteinExistence type="inferred from homology"/>
<reference key="1">
    <citation type="journal article" date="2007" name="Photosyn. Res.">
        <title>Complete nucleotide sequence of the freshwater unicellular cyanobacterium Synechococcus elongatus PCC 6301 chromosome: gene content and organization.</title>
        <authorList>
            <person name="Sugita C."/>
            <person name="Ogata K."/>
            <person name="Shikata M."/>
            <person name="Jikuya H."/>
            <person name="Takano J."/>
            <person name="Furumichi M."/>
            <person name="Kanehisa M."/>
            <person name="Omata T."/>
            <person name="Sugiura M."/>
            <person name="Sugita M."/>
        </authorList>
    </citation>
    <scope>NUCLEOTIDE SEQUENCE [LARGE SCALE GENOMIC DNA]</scope>
    <source>
        <strain>ATCC 27144 / PCC 6301 / SAUG 1402/1</strain>
    </source>
</reference>
<evidence type="ECO:0000255" key="1">
    <source>
        <dbReference type="HAMAP-Rule" id="MF_01681"/>
    </source>
</evidence>
<organism>
    <name type="scientific">Synechococcus sp. (strain ATCC 27144 / PCC 6301 / SAUG 1402/1)</name>
    <name type="common">Anacystis nidulans</name>
    <dbReference type="NCBI Taxonomy" id="269084"/>
    <lineage>
        <taxon>Bacteria</taxon>
        <taxon>Bacillati</taxon>
        <taxon>Cyanobacteriota</taxon>
        <taxon>Cyanophyceae</taxon>
        <taxon>Synechococcales</taxon>
        <taxon>Synechococcaceae</taxon>
        <taxon>Synechococcus</taxon>
    </lineage>
</organism>